<dbReference type="EMBL" id="CP000111">
    <property type="protein sequence ID" value="ABB49582.1"/>
    <property type="molecule type" value="Genomic_DNA"/>
</dbReference>
<dbReference type="RefSeq" id="WP_011376080.1">
    <property type="nucleotide sequence ID" value="NC_007577.1"/>
</dbReference>
<dbReference type="SMR" id="Q31C13"/>
<dbReference type="STRING" id="74546.PMT9312_0521"/>
<dbReference type="KEGG" id="pmi:PMT9312_0521"/>
<dbReference type="eggNOG" id="COG0233">
    <property type="taxonomic scope" value="Bacteria"/>
</dbReference>
<dbReference type="HOGENOM" id="CLU_073981_2_0_3"/>
<dbReference type="OrthoDB" id="9804006at2"/>
<dbReference type="Proteomes" id="UP000002715">
    <property type="component" value="Chromosome"/>
</dbReference>
<dbReference type="GO" id="GO:0005737">
    <property type="term" value="C:cytoplasm"/>
    <property type="evidence" value="ECO:0007669"/>
    <property type="project" value="UniProtKB-SubCell"/>
</dbReference>
<dbReference type="GO" id="GO:0043023">
    <property type="term" value="F:ribosomal large subunit binding"/>
    <property type="evidence" value="ECO:0007669"/>
    <property type="project" value="TreeGrafter"/>
</dbReference>
<dbReference type="GO" id="GO:0006415">
    <property type="term" value="P:translational termination"/>
    <property type="evidence" value="ECO:0007669"/>
    <property type="project" value="UniProtKB-UniRule"/>
</dbReference>
<dbReference type="CDD" id="cd00520">
    <property type="entry name" value="RRF"/>
    <property type="match status" value="1"/>
</dbReference>
<dbReference type="FunFam" id="1.10.132.20:FF:000001">
    <property type="entry name" value="Ribosome-recycling factor"/>
    <property type="match status" value="1"/>
</dbReference>
<dbReference type="FunFam" id="3.30.1360.40:FF:000001">
    <property type="entry name" value="Ribosome-recycling factor"/>
    <property type="match status" value="1"/>
</dbReference>
<dbReference type="Gene3D" id="3.30.1360.40">
    <property type="match status" value="1"/>
</dbReference>
<dbReference type="Gene3D" id="1.10.132.20">
    <property type="entry name" value="Ribosome-recycling factor"/>
    <property type="match status" value="1"/>
</dbReference>
<dbReference type="HAMAP" id="MF_00040">
    <property type="entry name" value="RRF"/>
    <property type="match status" value="1"/>
</dbReference>
<dbReference type="InterPro" id="IPR002661">
    <property type="entry name" value="Ribosome_recyc_fac"/>
</dbReference>
<dbReference type="InterPro" id="IPR023584">
    <property type="entry name" value="Ribosome_recyc_fac_dom"/>
</dbReference>
<dbReference type="InterPro" id="IPR036191">
    <property type="entry name" value="RRF_sf"/>
</dbReference>
<dbReference type="NCBIfam" id="TIGR00496">
    <property type="entry name" value="frr"/>
    <property type="match status" value="1"/>
</dbReference>
<dbReference type="PANTHER" id="PTHR20982:SF3">
    <property type="entry name" value="MITOCHONDRIAL RIBOSOME RECYCLING FACTOR PSEUDO 1"/>
    <property type="match status" value="1"/>
</dbReference>
<dbReference type="PANTHER" id="PTHR20982">
    <property type="entry name" value="RIBOSOME RECYCLING FACTOR"/>
    <property type="match status" value="1"/>
</dbReference>
<dbReference type="Pfam" id="PF01765">
    <property type="entry name" value="RRF"/>
    <property type="match status" value="1"/>
</dbReference>
<dbReference type="SUPFAM" id="SSF55194">
    <property type="entry name" value="Ribosome recycling factor, RRF"/>
    <property type="match status" value="1"/>
</dbReference>
<keyword id="KW-0963">Cytoplasm</keyword>
<keyword id="KW-0648">Protein biosynthesis</keyword>
<accession>Q31C13</accession>
<comment type="function">
    <text evidence="1">Responsible for the release of ribosomes from messenger RNA at the termination of protein biosynthesis. May increase the efficiency of translation by recycling ribosomes from one round of translation to another.</text>
</comment>
<comment type="subcellular location">
    <subcellularLocation>
        <location evidence="1">Cytoplasm</location>
    </subcellularLocation>
</comment>
<comment type="similarity">
    <text evidence="1">Belongs to the RRF family.</text>
</comment>
<proteinExistence type="inferred from homology"/>
<sequence length="182" mass="20634">MKEQEIQENMNKSIEATQRNFNTIRTGRANASLLDRISVEYYGAETPIKSLATISTVDSQTISIQPFDISCLQAIEKSISMSDLGITPNNDGKVIRINVPPLTEERRKEFCKLASKYAEEGKVALRNIRRDAVDKEKKDEKDGLISIDESRDNQSEIQKITNKFIALIETKLSEKEKEILKV</sequence>
<reference key="1">
    <citation type="journal article" date="2006" name="Science">
        <title>Genomic islands and the ecology and evolution of Prochlorococcus.</title>
        <authorList>
            <person name="Coleman M.L."/>
            <person name="Sullivan M.B."/>
            <person name="Martiny A.C."/>
            <person name="Steglich C."/>
            <person name="Barry K."/>
            <person name="Delong E.F."/>
            <person name="Chisholm S.W."/>
        </authorList>
    </citation>
    <scope>NUCLEOTIDE SEQUENCE [LARGE SCALE GENOMIC DNA]</scope>
    <source>
        <strain>MIT 9312</strain>
    </source>
</reference>
<organism>
    <name type="scientific">Prochlorococcus marinus (strain MIT 9312)</name>
    <dbReference type="NCBI Taxonomy" id="74546"/>
    <lineage>
        <taxon>Bacteria</taxon>
        <taxon>Bacillati</taxon>
        <taxon>Cyanobacteriota</taxon>
        <taxon>Cyanophyceae</taxon>
        <taxon>Synechococcales</taxon>
        <taxon>Prochlorococcaceae</taxon>
        <taxon>Prochlorococcus</taxon>
    </lineage>
</organism>
<gene>
    <name evidence="1" type="primary">frr</name>
    <name type="ordered locus">PMT9312_0521</name>
</gene>
<feature type="chain" id="PRO_1000003225" description="Ribosome-recycling factor">
    <location>
        <begin position="1"/>
        <end position="182"/>
    </location>
</feature>
<evidence type="ECO:0000255" key="1">
    <source>
        <dbReference type="HAMAP-Rule" id="MF_00040"/>
    </source>
</evidence>
<protein>
    <recommendedName>
        <fullName evidence="1">Ribosome-recycling factor</fullName>
        <shortName evidence="1">RRF</shortName>
    </recommendedName>
    <alternativeName>
        <fullName evidence="1">Ribosome-releasing factor</fullName>
    </alternativeName>
</protein>
<name>RRF_PROM9</name>